<sequence>MKKTSNKVVLVGTGAVGMSFIYSAVNQGLAEEYVLIDVNTKAAEGNAIDIQDTMAVLDKPFTIKAGTYEDCKDADLIVITAGRPQRPGETRLELIADNSRIMKGIAEAIKASGFNGVTVIASNPCDVLTTVYQQVTGYDEHSVVGAGTTLDSARLRRLVAEKLNVAPKSVNAYIMGEHGDSSVAAYSKATVMGQPISKYLAEGKITEADLEECWTRAIRMAYEIIERKGATYYGIGVCLNAISSAILRDEKTTFMVGAKLNGEYGQKGFYTGVPVILGSKGWETIIEWDLSDAEKAAFKKSCDALDATYQKAKEAIA</sequence>
<proteinExistence type="inferred from homology"/>
<feature type="chain" id="PRO_0000237550" description="L-lactate dehydrogenase">
    <location>
        <begin position="1"/>
        <end position="317"/>
    </location>
</feature>
<feature type="active site" description="Proton acceptor" evidence="1">
    <location>
        <position position="178"/>
    </location>
</feature>
<feature type="binding site" evidence="1">
    <location>
        <position position="16"/>
    </location>
    <ligand>
        <name>NAD(+)</name>
        <dbReference type="ChEBI" id="CHEBI:57540"/>
    </ligand>
</feature>
<feature type="binding site" evidence="1">
    <location>
        <position position="37"/>
    </location>
    <ligand>
        <name>NAD(+)</name>
        <dbReference type="ChEBI" id="CHEBI:57540"/>
    </ligand>
</feature>
<feature type="binding site" evidence="1">
    <location>
        <position position="68"/>
    </location>
    <ligand>
        <name>NAD(+)</name>
        <dbReference type="ChEBI" id="CHEBI:57540"/>
    </ligand>
</feature>
<feature type="binding site" evidence="1">
    <location>
        <position position="85"/>
    </location>
    <ligand>
        <name>substrate</name>
    </ligand>
</feature>
<feature type="binding site" evidence="1">
    <location>
        <position position="91"/>
    </location>
    <ligand>
        <name>substrate</name>
    </ligand>
</feature>
<feature type="binding site" evidence="1">
    <location>
        <begin position="121"/>
        <end position="123"/>
    </location>
    <ligand>
        <name>NAD(+)</name>
        <dbReference type="ChEBI" id="CHEBI:57540"/>
    </ligand>
</feature>
<feature type="binding site" evidence="1">
    <location>
        <begin position="123"/>
        <end position="126"/>
    </location>
    <ligand>
        <name>substrate</name>
    </ligand>
</feature>
<feature type="binding site" evidence="1">
    <location>
        <begin position="151"/>
        <end position="154"/>
    </location>
    <ligand>
        <name>substrate</name>
    </ligand>
</feature>
<feature type="binding site" evidence="1">
    <location>
        <position position="231"/>
    </location>
    <ligand>
        <name>substrate</name>
    </ligand>
</feature>
<feature type="modified residue" description="Phosphotyrosine" evidence="1">
    <location>
        <position position="222"/>
    </location>
</feature>
<organism>
    <name type="scientific">Mesoplasma florum (strain ATCC 33453 / NBRC 100688 / NCTC 11704 / L1)</name>
    <name type="common">Acholeplasma florum</name>
    <dbReference type="NCBI Taxonomy" id="265311"/>
    <lineage>
        <taxon>Bacteria</taxon>
        <taxon>Bacillati</taxon>
        <taxon>Mycoplasmatota</taxon>
        <taxon>Mollicutes</taxon>
        <taxon>Entomoplasmatales</taxon>
        <taxon>Entomoplasmataceae</taxon>
        <taxon>Mesoplasma</taxon>
    </lineage>
</organism>
<evidence type="ECO:0000255" key="1">
    <source>
        <dbReference type="HAMAP-Rule" id="MF_00488"/>
    </source>
</evidence>
<dbReference type="EC" id="1.1.1.27" evidence="1"/>
<dbReference type="EMBL" id="AE017263">
    <property type="protein sequence ID" value="AAT75954.1"/>
    <property type="molecule type" value="Genomic_DNA"/>
</dbReference>
<dbReference type="RefSeq" id="WP_011183494.1">
    <property type="nucleotide sequence ID" value="NC_006055.1"/>
</dbReference>
<dbReference type="RefSeq" id="YP_053838.1">
    <property type="nucleotide sequence ID" value="NC_006055.1"/>
</dbReference>
<dbReference type="SMR" id="Q6F0L9"/>
<dbReference type="STRING" id="265311.Mfl596"/>
<dbReference type="PaxDb" id="265311-Mfl596"/>
<dbReference type="EnsemblBacteria" id="AAT75954">
    <property type="protein sequence ID" value="AAT75954"/>
    <property type="gene ID" value="Mfl596"/>
</dbReference>
<dbReference type="GeneID" id="2897599"/>
<dbReference type="KEGG" id="mfl:Mfl596"/>
<dbReference type="PATRIC" id="fig|265311.5.peg.600"/>
<dbReference type="eggNOG" id="COG0039">
    <property type="taxonomic scope" value="Bacteria"/>
</dbReference>
<dbReference type="HOGENOM" id="CLU_045401_1_1_14"/>
<dbReference type="OrthoDB" id="9802969at2"/>
<dbReference type="UniPathway" id="UPA00554">
    <property type="reaction ID" value="UER00611"/>
</dbReference>
<dbReference type="Proteomes" id="UP000006647">
    <property type="component" value="Chromosome"/>
</dbReference>
<dbReference type="GO" id="GO:0005737">
    <property type="term" value="C:cytoplasm"/>
    <property type="evidence" value="ECO:0007669"/>
    <property type="project" value="UniProtKB-SubCell"/>
</dbReference>
<dbReference type="GO" id="GO:0004459">
    <property type="term" value="F:L-lactate dehydrogenase activity"/>
    <property type="evidence" value="ECO:0007669"/>
    <property type="project" value="UniProtKB-UniRule"/>
</dbReference>
<dbReference type="GO" id="GO:0006096">
    <property type="term" value="P:glycolytic process"/>
    <property type="evidence" value="ECO:0007669"/>
    <property type="project" value="UniProtKB-UniRule"/>
</dbReference>
<dbReference type="GO" id="GO:0006089">
    <property type="term" value="P:lactate metabolic process"/>
    <property type="evidence" value="ECO:0007669"/>
    <property type="project" value="TreeGrafter"/>
</dbReference>
<dbReference type="CDD" id="cd05291">
    <property type="entry name" value="HicDH_like"/>
    <property type="match status" value="1"/>
</dbReference>
<dbReference type="Gene3D" id="3.90.110.10">
    <property type="entry name" value="Lactate dehydrogenase/glycoside hydrolase, family 4, C-terminal"/>
    <property type="match status" value="1"/>
</dbReference>
<dbReference type="Gene3D" id="3.40.50.720">
    <property type="entry name" value="NAD(P)-binding Rossmann-like Domain"/>
    <property type="match status" value="1"/>
</dbReference>
<dbReference type="HAMAP" id="MF_00488">
    <property type="entry name" value="Lactate_dehydrog"/>
    <property type="match status" value="1"/>
</dbReference>
<dbReference type="InterPro" id="IPR001557">
    <property type="entry name" value="L-lactate/malate_DH"/>
</dbReference>
<dbReference type="InterPro" id="IPR011304">
    <property type="entry name" value="L-lactate_DH"/>
</dbReference>
<dbReference type="InterPro" id="IPR018177">
    <property type="entry name" value="L-lactate_DH_AS"/>
</dbReference>
<dbReference type="InterPro" id="IPR022383">
    <property type="entry name" value="Lactate/malate_DH_C"/>
</dbReference>
<dbReference type="InterPro" id="IPR001236">
    <property type="entry name" value="Lactate/malate_DH_N"/>
</dbReference>
<dbReference type="InterPro" id="IPR015955">
    <property type="entry name" value="Lactate_DH/Glyco_Ohase_4_C"/>
</dbReference>
<dbReference type="InterPro" id="IPR036291">
    <property type="entry name" value="NAD(P)-bd_dom_sf"/>
</dbReference>
<dbReference type="NCBIfam" id="TIGR01771">
    <property type="entry name" value="L-LDH-NAD"/>
    <property type="match status" value="1"/>
</dbReference>
<dbReference type="NCBIfam" id="NF000824">
    <property type="entry name" value="PRK00066.1"/>
    <property type="match status" value="1"/>
</dbReference>
<dbReference type="PANTHER" id="PTHR43128">
    <property type="entry name" value="L-2-HYDROXYCARBOXYLATE DEHYDROGENASE (NAD(P)(+))"/>
    <property type="match status" value="1"/>
</dbReference>
<dbReference type="PANTHER" id="PTHR43128:SF16">
    <property type="entry name" value="L-LACTATE DEHYDROGENASE"/>
    <property type="match status" value="1"/>
</dbReference>
<dbReference type="Pfam" id="PF02866">
    <property type="entry name" value="Ldh_1_C"/>
    <property type="match status" value="1"/>
</dbReference>
<dbReference type="Pfam" id="PF00056">
    <property type="entry name" value="Ldh_1_N"/>
    <property type="match status" value="1"/>
</dbReference>
<dbReference type="PIRSF" id="PIRSF000102">
    <property type="entry name" value="Lac_mal_DH"/>
    <property type="match status" value="1"/>
</dbReference>
<dbReference type="PRINTS" id="PR00086">
    <property type="entry name" value="LLDHDRGNASE"/>
</dbReference>
<dbReference type="SUPFAM" id="SSF56327">
    <property type="entry name" value="LDH C-terminal domain-like"/>
    <property type="match status" value="1"/>
</dbReference>
<dbReference type="SUPFAM" id="SSF51735">
    <property type="entry name" value="NAD(P)-binding Rossmann-fold domains"/>
    <property type="match status" value="1"/>
</dbReference>
<dbReference type="PROSITE" id="PS00064">
    <property type="entry name" value="L_LDH"/>
    <property type="match status" value="1"/>
</dbReference>
<accession>Q6F0L9</accession>
<gene>
    <name evidence="1" type="primary">ldh</name>
    <name type="ordered locus">Mfl596</name>
</gene>
<comment type="function">
    <text evidence="1">Catalyzes the conversion of lactate to pyruvate.</text>
</comment>
<comment type="catalytic activity">
    <reaction evidence="1">
        <text>(S)-lactate + NAD(+) = pyruvate + NADH + H(+)</text>
        <dbReference type="Rhea" id="RHEA:23444"/>
        <dbReference type="ChEBI" id="CHEBI:15361"/>
        <dbReference type="ChEBI" id="CHEBI:15378"/>
        <dbReference type="ChEBI" id="CHEBI:16651"/>
        <dbReference type="ChEBI" id="CHEBI:57540"/>
        <dbReference type="ChEBI" id="CHEBI:57945"/>
        <dbReference type="EC" id="1.1.1.27"/>
    </reaction>
</comment>
<comment type="pathway">
    <text evidence="1">Fermentation; pyruvate fermentation to lactate; (S)-lactate from pyruvate: step 1/1.</text>
</comment>
<comment type="subunit">
    <text evidence="1">Homotetramer.</text>
</comment>
<comment type="subcellular location">
    <subcellularLocation>
        <location evidence="1">Cytoplasm</location>
    </subcellularLocation>
</comment>
<comment type="similarity">
    <text evidence="1">Belongs to the LDH/MDH superfamily. LDH family.</text>
</comment>
<keyword id="KW-0963">Cytoplasm</keyword>
<keyword id="KW-0520">NAD</keyword>
<keyword id="KW-0560">Oxidoreductase</keyword>
<keyword id="KW-0597">Phosphoprotein</keyword>
<keyword id="KW-1185">Reference proteome</keyword>
<reference key="1">
    <citation type="submission" date="2004-06" db="EMBL/GenBank/DDBJ databases">
        <authorList>
            <person name="Birren B.W."/>
            <person name="Stange-Thomann N."/>
            <person name="Hafez N."/>
            <person name="DeCaprio D."/>
            <person name="Fisher S."/>
            <person name="Butler J."/>
            <person name="Elkins T."/>
            <person name="Kodira C.D."/>
            <person name="Major J."/>
            <person name="Wang S."/>
            <person name="Nicol R."/>
            <person name="Nusbaum C."/>
        </authorList>
    </citation>
    <scope>NUCLEOTIDE SEQUENCE [LARGE SCALE GENOMIC DNA]</scope>
    <source>
        <strain>ATCC 33453 / NBRC 100688 / NCTC 11704 / L1</strain>
    </source>
</reference>
<name>LDH_MESFL</name>
<protein>
    <recommendedName>
        <fullName evidence="1">L-lactate dehydrogenase</fullName>
        <shortName evidence="1">L-LDH</shortName>
        <ecNumber evidence="1">1.1.1.27</ecNumber>
    </recommendedName>
</protein>